<gene>
    <name evidence="6 9" type="primary">Zar1l</name>
    <name evidence="7" type="synonym">Zar2</name>
</gene>
<protein>
    <recommendedName>
        <fullName evidence="6">Protein ZAR1-like</fullName>
    </recommendedName>
    <alternativeName>
        <fullName evidence="6">Zygote arrest protein 1-like</fullName>
    </alternativeName>
    <alternativeName>
        <fullName evidence="7">Zygote arrest protein 2</fullName>
    </alternativeName>
</protein>
<reference key="1">
    <citation type="journal article" date="2010" name="Dev. Dyn.">
        <title>Mouse ZAR1-like (XM_359149) colocalizes with mRNA processing components and its dominant-negative mutant caused two-cell-stage embryonic arrest.</title>
        <authorList>
            <person name="Hu J."/>
            <person name="Wang F."/>
            <person name="Zhu X."/>
            <person name="Yuan Y."/>
            <person name="Ding M."/>
            <person name="Gao S."/>
        </authorList>
    </citation>
    <scope>NUCLEOTIDE SEQUENCE [MRNA]</scope>
    <scope>SUBCELLULAR LOCATION</scope>
    <scope>TISSUE SPECIFICITY</scope>
    <source>
        <strain>C57BL/6J</strain>
    </source>
</reference>
<reference key="2">
    <citation type="journal article" date="2009" name="PLoS Biol.">
        <title>Lineage-specific biology revealed by a finished genome assembly of the mouse.</title>
        <authorList>
            <person name="Church D.M."/>
            <person name="Goodstadt L."/>
            <person name="Hillier L.W."/>
            <person name="Zody M.C."/>
            <person name="Goldstein S."/>
            <person name="She X."/>
            <person name="Bult C.J."/>
            <person name="Agarwala R."/>
            <person name="Cherry J.L."/>
            <person name="DiCuccio M."/>
            <person name="Hlavina W."/>
            <person name="Kapustin Y."/>
            <person name="Meric P."/>
            <person name="Maglott D."/>
            <person name="Birtle Z."/>
            <person name="Marques A.C."/>
            <person name="Graves T."/>
            <person name="Zhou S."/>
            <person name="Teague B."/>
            <person name="Potamousis K."/>
            <person name="Churas C."/>
            <person name="Place M."/>
            <person name="Herschleb J."/>
            <person name="Runnheim R."/>
            <person name="Forrest D."/>
            <person name="Amos-Landgraf J."/>
            <person name="Schwartz D.C."/>
            <person name="Cheng Z."/>
            <person name="Lindblad-Toh K."/>
            <person name="Eichler E.E."/>
            <person name="Ponting C.P."/>
        </authorList>
    </citation>
    <scope>NUCLEOTIDE SEQUENCE [LARGE SCALE GENOMIC DNA]</scope>
    <source>
        <strain>C57BL/6J</strain>
    </source>
</reference>
<reference key="3">
    <citation type="journal article" date="2019" name="Nucleic Acids Res.">
        <title>ZAR1 and ZAR2 are required for oocyte meiotic maturation by regulating the maternal transcriptome and mRNA translational activation.</title>
        <authorList>
            <person name="Rong Y."/>
            <person name="Ji S.Y."/>
            <person name="Zhu Y.Z."/>
            <person name="Wu Y.W."/>
            <person name="Shen L."/>
            <person name="Fan H.Y."/>
        </authorList>
    </citation>
    <scope>FUNCTION</scope>
    <scope>SUBCELLULAR LOCATION</scope>
    <scope>DOMAIN</scope>
    <scope>TISSUE SPECIFICITY</scope>
    <scope>DEVELOPMENTAL STAGE</scope>
    <scope>DISRUPTION PHENOTYPE</scope>
    <scope>INTERACTION WITH YBX2</scope>
</reference>
<name>ZAR1L_MOUSE</name>
<accession>C3VD30</accession>
<comment type="function">
    <text evidence="1 5">mRNA-binding protein required for maternal mRNA storage, translation and degradation during oocyte maturation (PubMed:31598710). Probably promotes formation of some phase-separated membraneless compartment that stores maternal mRNAs in oocytes: acts by undergoing liquid-liquid phase separation upon binding to maternal mRNAs (By similarity). Binds to the 3'-UTR of maternal mRNAs, inhibiting their translation (PubMed:31598710).</text>
</comment>
<comment type="subunit">
    <text evidence="5">Interacts with YBX2.</text>
</comment>
<comment type="subcellular location">
    <subcellularLocation>
        <location evidence="4 5">Cytoplasm</location>
        <location evidence="4 5">Cytoplasmic ribonucleoprotein granule</location>
    </subcellularLocation>
</comment>
<comment type="tissue specificity">
    <text evidence="4 5">Expressed in oocytes and zygotes (PubMed:20014101, PubMed:31598710). Predominantly expressed in maturing oocytes before maternal-to-zygotic transition (MZT) (PubMed:31598710). Less abundant than Zar1 (PubMed:31598710).</text>
</comment>
<comment type="developmental stage">
    <text evidence="5">Accumulates during oocyte growth and degradaded after meiotic resumption: present in germinal vesicle (GV) stage oocytes and decreases during meiotic maturation and fertilization, and undetectable in 2-cell embryos.</text>
</comment>
<comment type="domain">
    <text evidence="1">Disordered region at the N-terminus undergoes liquid-liquid phase separation (LLPS) for the formation of membraneless compartments that store maternal mRNAs in oocytes.</text>
</comment>
<comment type="domain">
    <text evidence="5">The 3CxxC-type mediates binding to the 3'-UTR of mRNAs.</text>
</comment>
<comment type="disruption phenotype">
    <text evidence="5">No visible phenotype: mice are viable and females are fertile (PubMed:31598710). Mice lacking Zar1 and Zar1l oocytes display delayed meiotic resumption and polar body-1 emission and a higher incidence of abnormal meiotic spindle formation and chromosome aneuploidy (PubMed:31598710). The grown oocytes of Zar1 and Zar1l mutant mice contain decreased levels of many maternal mRNAs and display a reduced level of protein synthesis (PubMed:31598710).</text>
</comment>
<comment type="similarity">
    <text evidence="8">Belongs to the ZAR1 family.</text>
</comment>
<organism>
    <name type="scientific">Mus musculus</name>
    <name type="common">Mouse</name>
    <dbReference type="NCBI Taxonomy" id="10090"/>
    <lineage>
        <taxon>Eukaryota</taxon>
        <taxon>Metazoa</taxon>
        <taxon>Chordata</taxon>
        <taxon>Craniata</taxon>
        <taxon>Vertebrata</taxon>
        <taxon>Euteleostomi</taxon>
        <taxon>Mammalia</taxon>
        <taxon>Eutheria</taxon>
        <taxon>Euarchontoglires</taxon>
        <taxon>Glires</taxon>
        <taxon>Rodentia</taxon>
        <taxon>Myomorpha</taxon>
        <taxon>Muroidea</taxon>
        <taxon>Muridae</taxon>
        <taxon>Murinae</taxon>
        <taxon>Mus</taxon>
        <taxon>Mus</taxon>
    </lineage>
</organism>
<feature type="chain" id="PRO_0000457518" description="Protein ZAR1-like">
    <location>
        <begin position="1"/>
        <end position="291"/>
    </location>
</feature>
<feature type="zinc finger region" description="3CxxC-type" evidence="2">
    <location>
        <begin position="195"/>
        <end position="280"/>
    </location>
</feature>
<feature type="region of interest" description="Disordered" evidence="3">
    <location>
        <begin position="103"/>
        <end position="152"/>
    </location>
</feature>
<feature type="compositionally biased region" description="Low complexity" evidence="3">
    <location>
        <begin position="106"/>
        <end position="115"/>
    </location>
</feature>
<feature type="compositionally biased region" description="Basic and acidic residues" evidence="3">
    <location>
        <begin position="116"/>
        <end position="129"/>
    </location>
</feature>
<proteinExistence type="evidence at protein level"/>
<evidence type="ECO:0000250" key="1">
    <source>
        <dbReference type="UniProtKB" id="Q80SU3"/>
    </source>
</evidence>
<evidence type="ECO:0000255" key="2"/>
<evidence type="ECO:0000256" key="3">
    <source>
        <dbReference type="SAM" id="MobiDB-lite"/>
    </source>
</evidence>
<evidence type="ECO:0000269" key="4">
    <source>
    </source>
</evidence>
<evidence type="ECO:0000269" key="5">
    <source>
    </source>
</evidence>
<evidence type="ECO:0000303" key="6">
    <source>
    </source>
</evidence>
<evidence type="ECO:0000303" key="7">
    <source>
    </source>
</evidence>
<evidence type="ECO:0000305" key="8"/>
<evidence type="ECO:0000312" key="9">
    <source>
        <dbReference type="MGI" id="MGI:3690051"/>
    </source>
</evidence>
<keyword id="KW-0963">Cytoplasm</keyword>
<keyword id="KW-0217">Developmental protein</keyword>
<keyword id="KW-0221">Differentiation</keyword>
<keyword id="KW-0479">Metal-binding</keyword>
<keyword id="KW-0896">Oogenesis</keyword>
<keyword id="KW-1185">Reference proteome</keyword>
<keyword id="KW-0694">RNA-binding</keyword>
<keyword id="KW-0862">Zinc</keyword>
<keyword id="KW-0863">Zinc-finger</keyword>
<sequence>MERLFCVPCGYGTTDPLTYPGPWRHCQQQNWPQNMGAPIFLARLRVPANVSQSCMNPYNRAQLQAVSTQMDPNLSLWLRSVHTTEVGVQVSLRVDKSVQCSQGSQTLHSSSLSDRTSSRKPTEAWEVGRRALIRRPQDGEDEESQEELTGPTEASQLLLPTWSRDREEQFPRLKELGEEYAHSPQDRKGKQFLELKYGYFHCKDCKRRWESAYVWCISGTNKVYFKQLCNKCQKSFNPYRVEEIQCQTCLRVCCSCSPKKRHIDVRRPHRQELCGHCKDKKFSCSVFFSLK</sequence>
<dbReference type="EMBL" id="FJ858201">
    <property type="protein sequence ID" value="ACO82078.1"/>
    <property type="molecule type" value="mRNA"/>
</dbReference>
<dbReference type="CCDS" id="CCDS51709.1"/>
<dbReference type="RefSeq" id="NP_001153165.1">
    <property type="nucleotide sequence ID" value="NM_001159693.2"/>
</dbReference>
<dbReference type="FunCoup" id="C3VD30">
    <property type="interactions" value="60"/>
</dbReference>
<dbReference type="STRING" id="10090.ENSMUSP00000114116"/>
<dbReference type="GlyGen" id="C3VD30">
    <property type="glycosylation" value="1 site"/>
</dbReference>
<dbReference type="iPTMnet" id="C3VD30"/>
<dbReference type="PhosphoSitePlus" id="C3VD30"/>
<dbReference type="PaxDb" id="10090-ENSMUSP00000114116"/>
<dbReference type="Antibodypedia" id="49134">
    <property type="antibodies" value="38 antibodies from 9 providers"/>
</dbReference>
<dbReference type="Ensembl" id="ENSMUST00000118769.2">
    <property type="protein sequence ID" value="ENSMUSP00000114116.2"/>
    <property type="gene ID" value="ENSMUSG00000056586.9"/>
</dbReference>
<dbReference type="GeneID" id="545824"/>
<dbReference type="KEGG" id="mmu:545824"/>
<dbReference type="UCSC" id="uc012ehm.1">
    <property type="organism name" value="mouse"/>
</dbReference>
<dbReference type="AGR" id="MGI:3690051"/>
<dbReference type="CTD" id="646799"/>
<dbReference type="MGI" id="MGI:3690051">
    <property type="gene designation" value="Zar1l"/>
</dbReference>
<dbReference type="VEuPathDB" id="HostDB:ENSMUSG00000056586"/>
<dbReference type="eggNOG" id="ENOG502QWC9">
    <property type="taxonomic scope" value="Eukaryota"/>
</dbReference>
<dbReference type="GeneTree" id="ENSGT00390000012305"/>
<dbReference type="HOGENOM" id="CLU_053350_1_0_1"/>
<dbReference type="InParanoid" id="C3VD30"/>
<dbReference type="OMA" id="KFSCGNI"/>
<dbReference type="OrthoDB" id="9885288at2759"/>
<dbReference type="TreeFam" id="TF331383"/>
<dbReference type="BioGRID-ORCS" id="545824">
    <property type="hits" value="3 hits in 78 CRISPR screens"/>
</dbReference>
<dbReference type="PRO" id="PR:C3VD30"/>
<dbReference type="Proteomes" id="UP000000589">
    <property type="component" value="Chromosome 5"/>
</dbReference>
<dbReference type="RNAct" id="C3VD30">
    <property type="molecule type" value="protein"/>
</dbReference>
<dbReference type="Bgee" id="ENSMUSG00000056586">
    <property type="expression patterns" value="Expressed in primary oocyte and 11 other cell types or tissues"/>
</dbReference>
<dbReference type="GO" id="GO:0005737">
    <property type="term" value="C:cytoplasm"/>
    <property type="evidence" value="ECO:0000314"/>
    <property type="project" value="MGI"/>
</dbReference>
<dbReference type="GO" id="GO:0036464">
    <property type="term" value="C:cytoplasmic ribonucleoprotein granule"/>
    <property type="evidence" value="ECO:0007669"/>
    <property type="project" value="UniProtKB-SubCell"/>
</dbReference>
<dbReference type="GO" id="GO:0043232">
    <property type="term" value="C:intracellular membraneless organelle"/>
    <property type="evidence" value="ECO:0000314"/>
    <property type="project" value="UniProtKB"/>
</dbReference>
<dbReference type="GO" id="GO:0003730">
    <property type="term" value="F:mRNA 3'-UTR binding"/>
    <property type="evidence" value="ECO:0000314"/>
    <property type="project" value="UniProtKB"/>
</dbReference>
<dbReference type="GO" id="GO:0008270">
    <property type="term" value="F:zinc ion binding"/>
    <property type="evidence" value="ECO:0007669"/>
    <property type="project" value="UniProtKB-KW"/>
</dbReference>
<dbReference type="GO" id="GO:0017148">
    <property type="term" value="P:negative regulation of translation"/>
    <property type="evidence" value="ECO:0000314"/>
    <property type="project" value="UniProtKB"/>
</dbReference>
<dbReference type="GO" id="GO:0001556">
    <property type="term" value="P:oocyte maturation"/>
    <property type="evidence" value="ECO:0000314"/>
    <property type="project" value="UniProtKB"/>
</dbReference>
<dbReference type="InterPro" id="IPR026775">
    <property type="entry name" value="Zar1"/>
</dbReference>
<dbReference type="InterPro" id="IPR027377">
    <property type="entry name" value="ZAR1/RTP1-5-like_Znf-3CxxC"/>
</dbReference>
<dbReference type="PANTHER" id="PTHR31054:SF5">
    <property type="entry name" value="PROTEIN ZAR1-LIKE"/>
    <property type="match status" value="1"/>
</dbReference>
<dbReference type="PANTHER" id="PTHR31054">
    <property type="entry name" value="ZYGOTE ARREST PROTEIN 1-LIKE ISOFORM X1"/>
    <property type="match status" value="1"/>
</dbReference>
<dbReference type="Pfam" id="PF13695">
    <property type="entry name" value="Zn_ribbon_3CxxC"/>
    <property type="match status" value="1"/>
</dbReference>
<dbReference type="SMART" id="SM01328">
    <property type="entry name" value="zf-3CxxC"/>
    <property type="match status" value="1"/>
</dbReference>